<dbReference type="EMBL" id="AB168871">
    <property type="protein sequence ID" value="BAE00974.1"/>
    <property type="molecule type" value="mRNA"/>
</dbReference>
<dbReference type="RefSeq" id="NP_001271817.1">
    <property type="nucleotide sequence ID" value="NM_001284888.1"/>
</dbReference>
<dbReference type="SMR" id="Q4R7E8"/>
<dbReference type="STRING" id="9541.ENSMFAP00000002035"/>
<dbReference type="Proteomes" id="UP000233100">
    <property type="component" value="Unplaced"/>
</dbReference>
<dbReference type="GO" id="GO:0005737">
    <property type="term" value="C:cytoplasm"/>
    <property type="evidence" value="ECO:0007669"/>
    <property type="project" value="TreeGrafter"/>
</dbReference>
<dbReference type="GO" id="GO:0051087">
    <property type="term" value="F:protein-folding chaperone binding"/>
    <property type="evidence" value="ECO:0000250"/>
    <property type="project" value="UniProtKB"/>
</dbReference>
<dbReference type="InterPro" id="IPR031679">
    <property type="entry name" value="SSTK-IP"/>
</dbReference>
<dbReference type="PANTHER" id="PTHR37368">
    <property type="entry name" value="TSSK6-ACTIVATING CO-CHAPERONE PROTEIN"/>
    <property type="match status" value="1"/>
</dbReference>
<dbReference type="PANTHER" id="PTHR37368:SF1">
    <property type="entry name" value="TSSK6-ACTIVATING CO-CHAPERONE PROTEIN"/>
    <property type="match status" value="1"/>
</dbReference>
<dbReference type="Pfam" id="PF15836">
    <property type="entry name" value="SSTK-IP"/>
    <property type="match status" value="1"/>
</dbReference>
<evidence type="ECO:0000250" key="1"/>
<evidence type="ECO:0000256" key="2">
    <source>
        <dbReference type="SAM" id="MobiDB-lite"/>
    </source>
</evidence>
<evidence type="ECO:0000305" key="3"/>
<protein>
    <recommendedName>
        <fullName>TSSK6-activating co-chaperone protein</fullName>
    </recommendedName>
</protein>
<accession>Q4R7E8</accession>
<proteinExistence type="evidence at transcript level"/>
<sequence>MEQHTSHPNRKVPAKEEANAVPLCRAKPSPSYINLQASSPPATFLNVQTTKLPSVDHKPKECLGLLECMYANLQLQTQLAQQQMAILEHLQASVTQLAPGRGSNNSSLPALSPNPLLNHLPQFSK</sequence>
<feature type="chain" id="PRO_0000271074" description="TSSK6-activating co-chaperone protein">
    <location>
        <begin position="1"/>
        <end position="125"/>
    </location>
</feature>
<feature type="region of interest" description="Disordered" evidence="2">
    <location>
        <begin position="1"/>
        <end position="21"/>
    </location>
</feature>
<feature type="region of interest" description="Disordered" evidence="2">
    <location>
        <begin position="97"/>
        <end position="125"/>
    </location>
</feature>
<feature type="compositionally biased region" description="Low complexity" evidence="2">
    <location>
        <begin position="103"/>
        <end position="125"/>
    </location>
</feature>
<name>TSACC_MACFA</name>
<comment type="function">
    <text evidence="1">Co-chaperone that facilitates HSP-mediated activation of TSSK6.</text>
</comment>
<comment type="subunit">
    <text evidence="1">Interacts with HSP70. Associates with HSP90. Interacts with TSSK6; this interaction is direct and recruits TSACC to HSP90 (By similarity).</text>
</comment>
<comment type="similarity">
    <text evidence="3">Belongs to the TSACC family.</text>
</comment>
<reference key="1">
    <citation type="submission" date="2005-06" db="EMBL/GenBank/DDBJ databases">
        <title>DNA sequences of macaque genes expressed in brain or testis and its evolutionary implications.</title>
        <authorList>
            <consortium name="International consortium for macaque cDNA sequencing and analysis"/>
        </authorList>
    </citation>
    <scope>NUCLEOTIDE SEQUENCE [LARGE SCALE MRNA]</scope>
    <source>
        <tissue>Testis</tissue>
    </source>
</reference>
<gene>
    <name type="primary">TSACC</name>
    <name type="ORF">QtsA-15495</name>
</gene>
<organism>
    <name type="scientific">Macaca fascicularis</name>
    <name type="common">Crab-eating macaque</name>
    <name type="synonym">Cynomolgus monkey</name>
    <dbReference type="NCBI Taxonomy" id="9541"/>
    <lineage>
        <taxon>Eukaryota</taxon>
        <taxon>Metazoa</taxon>
        <taxon>Chordata</taxon>
        <taxon>Craniata</taxon>
        <taxon>Vertebrata</taxon>
        <taxon>Euteleostomi</taxon>
        <taxon>Mammalia</taxon>
        <taxon>Eutheria</taxon>
        <taxon>Euarchontoglires</taxon>
        <taxon>Primates</taxon>
        <taxon>Haplorrhini</taxon>
        <taxon>Catarrhini</taxon>
        <taxon>Cercopithecidae</taxon>
        <taxon>Cercopithecinae</taxon>
        <taxon>Macaca</taxon>
    </lineage>
</organism>
<keyword id="KW-0143">Chaperone</keyword>
<keyword id="KW-1185">Reference proteome</keyword>